<gene>
    <name type="primary">HBB</name>
</gene>
<accession>Q7M3C2</accession>
<organism>
    <name type="scientific">Hapalemur griseus</name>
    <name type="common">Gray gentle lemur</name>
    <name type="synonym">Eastern lesser bamboo lemur</name>
    <dbReference type="NCBI Taxonomy" id="13557"/>
    <lineage>
        <taxon>Eukaryota</taxon>
        <taxon>Metazoa</taxon>
        <taxon>Chordata</taxon>
        <taxon>Craniata</taxon>
        <taxon>Vertebrata</taxon>
        <taxon>Euteleostomi</taxon>
        <taxon>Mammalia</taxon>
        <taxon>Eutheria</taxon>
        <taxon>Euarchontoglires</taxon>
        <taxon>Primates</taxon>
        <taxon>Strepsirrhini</taxon>
        <taxon>Lemuriformes</taxon>
        <taxon>Lemuridae</taxon>
        <taxon>Hapalemur</taxon>
    </lineage>
</organism>
<reference key="1">
    <citation type="journal article" date="1990" name="Comp. Biochem. Physiol.">
        <title>Prosimian hemoglobins. V. The primary structures of the alpha-I, alpha-II and beta-hemoglobin chains of Hapalemur griseus, with a note on the classification of Microcebus.</title>
        <authorList>
            <person name="Duffy L.K."/>
            <person name="Luick J."/>
            <person name="Coppenhaver D.H."/>
        </authorList>
    </citation>
    <scope>PROTEIN SEQUENCE</scope>
</reference>
<name>HBB_HAPGR</name>
<feature type="chain" id="PRO_0000052971" description="Hemoglobin subunit beta">
    <location>
        <begin position="1"/>
        <end position="146"/>
    </location>
</feature>
<feature type="domain" description="Globin" evidence="2">
    <location>
        <begin position="2"/>
        <end position="146"/>
    </location>
</feature>
<feature type="binding site" description="distal binding residue">
    <location>
        <position position="63"/>
    </location>
    <ligand>
        <name>heme b</name>
        <dbReference type="ChEBI" id="CHEBI:60344"/>
    </ligand>
    <ligandPart>
        <name>Fe</name>
        <dbReference type="ChEBI" id="CHEBI:18248"/>
    </ligandPart>
</feature>
<feature type="binding site" description="proximal binding residue">
    <location>
        <position position="92"/>
    </location>
    <ligand>
        <name>heme b</name>
        <dbReference type="ChEBI" id="CHEBI:60344"/>
    </ligand>
    <ligandPart>
        <name>Fe</name>
        <dbReference type="ChEBI" id="CHEBI:18248"/>
    </ligandPart>
</feature>
<feature type="modified residue" description="Phosphothreonine" evidence="1">
    <location>
        <position position="12"/>
    </location>
</feature>
<feature type="modified residue" description="Phosphoserine" evidence="1">
    <location>
        <position position="44"/>
    </location>
</feature>
<feature type="modified residue" description="N6-acetyllysine" evidence="1">
    <location>
        <position position="59"/>
    </location>
</feature>
<feature type="modified residue" description="N6-acetyllysine" evidence="1">
    <location>
        <position position="82"/>
    </location>
</feature>
<feature type="modified residue" description="S-nitrosocysteine" evidence="1">
    <location>
        <position position="93"/>
    </location>
</feature>
<feature type="modified residue" description="N6-acetyllysine" evidence="1">
    <location>
        <position position="144"/>
    </location>
</feature>
<comment type="function">
    <text>Involved in oxygen transport from the lung to the various peripheral tissues.</text>
</comment>
<comment type="subunit">
    <text>Heterotetramer of two alpha chains and two beta chains.</text>
</comment>
<comment type="tissue specificity">
    <text>Red blood cells.</text>
</comment>
<comment type="similarity">
    <text evidence="2">Belongs to the globin family.</text>
</comment>
<evidence type="ECO:0000250" key="1">
    <source>
        <dbReference type="UniProtKB" id="P68871"/>
    </source>
</evidence>
<evidence type="ECO:0000255" key="2">
    <source>
        <dbReference type="PROSITE-ProRule" id="PRU00238"/>
    </source>
</evidence>
<sequence>TFLTPEENGHVTSLWGKVDVEKVGGEALGRLLVVYPWTQRFFESFGDLSTPSAIMGNPKVKAHGKKVLSAFSEGLHHLDNLKGTFAQLSELHCDKLHVDPQNFTLLGNVLVIVLAEHFGNAFSPPVQAAFQKVVTGVANALAHKYH</sequence>
<protein>
    <recommendedName>
        <fullName>Hemoglobin subunit beta</fullName>
    </recommendedName>
    <alternativeName>
        <fullName>Beta-globin</fullName>
    </alternativeName>
    <alternativeName>
        <fullName>Hemoglobin beta chain</fullName>
    </alternativeName>
</protein>
<keyword id="KW-0007">Acetylation</keyword>
<keyword id="KW-0903">Direct protein sequencing</keyword>
<keyword id="KW-0349">Heme</keyword>
<keyword id="KW-0408">Iron</keyword>
<keyword id="KW-0479">Metal-binding</keyword>
<keyword id="KW-0561">Oxygen transport</keyword>
<keyword id="KW-0597">Phosphoprotein</keyword>
<keyword id="KW-0702">S-nitrosylation</keyword>
<keyword id="KW-0813">Transport</keyword>
<dbReference type="PIR" id="C60515">
    <property type="entry name" value="C60515"/>
</dbReference>
<dbReference type="SMR" id="Q7M3C2"/>
<dbReference type="GO" id="GO:0072562">
    <property type="term" value="C:blood microparticle"/>
    <property type="evidence" value="ECO:0007669"/>
    <property type="project" value="TreeGrafter"/>
</dbReference>
<dbReference type="GO" id="GO:0031838">
    <property type="term" value="C:haptoglobin-hemoglobin complex"/>
    <property type="evidence" value="ECO:0007669"/>
    <property type="project" value="TreeGrafter"/>
</dbReference>
<dbReference type="GO" id="GO:0005833">
    <property type="term" value="C:hemoglobin complex"/>
    <property type="evidence" value="ECO:0007669"/>
    <property type="project" value="InterPro"/>
</dbReference>
<dbReference type="GO" id="GO:0031720">
    <property type="term" value="F:haptoglobin binding"/>
    <property type="evidence" value="ECO:0007669"/>
    <property type="project" value="TreeGrafter"/>
</dbReference>
<dbReference type="GO" id="GO:0020037">
    <property type="term" value="F:heme binding"/>
    <property type="evidence" value="ECO:0007669"/>
    <property type="project" value="InterPro"/>
</dbReference>
<dbReference type="GO" id="GO:0031721">
    <property type="term" value="F:hemoglobin alpha binding"/>
    <property type="evidence" value="ECO:0007669"/>
    <property type="project" value="TreeGrafter"/>
</dbReference>
<dbReference type="GO" id="GO:0046872">
    <property type="term" value="F:metal ion binding"/>
    <property type="evidence" value="ECO:0007669"/>
    <property type="project" value="UniProtKB-KW"/>
</dbReference>
<dbReference type="GO" id="GO:0043177">
    <property type="term" value="F:organic acid binding"/>
    <property type="evidence" value="ECO:0007669"/>
    <property type="project" value="TreeGrafter"/>
</dbReference>
<dbReference type="GO" id="GO:0019825">
    <property type="term" value="F:oxygen binding"/>
    <property type="evidence" value="ECO:0007669"/>
    <property type="project" value="InterPro"/>
</dbReference>
<dbReference type="GO" id="GO:0005344">
    <property type="term" value="F:oxygen carrier activity"/>
    <property type="evidence" value="ECO:0007669"/>
    <property type="project" value="UniProtKB-KW"/>
</dbReference>
<dbReference type="GO" id="GO:0004601">
    <property type="term" value="F:peroxidase activity"/>
    <property type="evidence" value="ECO:0007669"/>
    <property type="project" value="TreeGrafter"/>
</dbReference>
<dbReference type="GO" id="GO:0042744">
    <property type="term" value="P:hydrogen peroxide catabolic process"/>
    <property type="evidence" value="ECO:0007669"/>
    <property type="project" value="TreeGrafter"/>
</dbReference>
<dbReference type="CDD" id="cd08925">
    <property type="entry name" value="Hb-beta-like"/>
    <property type="match status" value="1"/>
</dbReference>
<dbReference type="FunFam" id="1.10.490.10:FF:000001">
    <property type="entry name" value="Hemoglobin subunit beta"/>
    <property type="match status" value="1"/>
</dbReference>
<dbReference type="Gene3D" id="1.10.490.10">
    <property type="entry name" value="Globins"/>
    <property type="match status" value="1"/>
</dbReference>
<dbReference type="InterPro" id="IPR000971">
    <property type="entry name" value="Globin"/>
</dbReference>
<dbReference type="InterPro" id="IPR009050">
    <property type="entry name" value="Globin-like_sf"/>
</dbReference>
<dbReference type="InterPro" id="IPR012292">
    <property type="entry name" value="Globin/Proto"/>
</dbReference>
<dbReference type="InterPro" id="IPR002337">
    <property type="entry name" value="Hemoglobin_b"/>
</dbReference>
<dbReference type="InterPro" id="IPR050056">
    <property type="entry name" value="Hemoglobin_oxygen_transport"/>
</dbReference>
<dbReference type="PANTHER" id="PTHR11442">
    <property type="entry name" value="HEMOGLOBIN FAMILY MEMBER"/>
    <property type="match status" value="1"/>
</dbReference>
<dbReference type="PANTHER" id="PTHR11442:SF42">
    <property type="entry name" value="HEMOGLOBIN SUBUNIT BETA"/>
    <property type="match status" value="1"/>
</dbReference>
<dbReference type="Pfam" id="PF00042">
    <property type="entry name" value="Globin"/>
    <property type="match status" value="1"/>
</dbReference>
<dbReference type="PRINTS" id="PR00814">
    <property type="entry name" value="BETAHAEM"/>
</dbReference>
<dbReference type="SUPFAM" id="SSF46458">
    <property type="entry name" value="Globin-like"/>
    <property type="match status" value="1"/>
</dbReference>
<dbReference type="PROSITE" id="PS01033">
    <property type="entry name" value="GLOBIN"/>
    <property type="match status" value="1"/>
</dbReference>
<proteinExistence type="evidence at protein level"/>